<reference key="1">
    <citation type="submission" date="2004-11" db="EMBL/GenBank/DDBJ databases">
        <authorList>
            <consortium name="The German cDNA consortium"/>
        </authorList>
    </citation>
    <scope>NUCLEOTIDE SEQUENCE [LARGE SCALE MRNA]</scope>
    <source>
        <tissue>Brain cortex</tissue>
    </source>
</reference>
<reference key="2">
    <citation type="submission" date="2017-12" db="EMBL/GenBank/DDBJ databases">
        <title>High-resolution comparative analysis of great ape genomes.</title>
        <authorList>
            <person name="Pollen A."/>
            <person name="Hastie A."/>
            <person name="Hormozdiari F."/>
            <person name="Dougherty M."/>
            <person name="Liu R."/>
            <person name="Chaisson M."/>
            <person name="Hoppe E."/>
            <person name="Hill C."/>
            <person name="Pang A."/>
            <person name="Hillier L."/>
            <person name="Baker C."/>
            <person name="Armstrong J."/>
            <person name="Shendure J."/>
            <person name="Paten B."/>
            <person name="Wilson R."/>
            <person name="Chao H."/>
            <person name="Schneider V."/>
            <person name="Ventura M."/>
            <person name="Kronenberg Z."/>
            <person name="Murali S."/>
            <person name="Gordon D."/>
            <person name="Cantsilieris S."/>
            <person name="Munson K."/>
            <person name="Nelson B."/>
            <person name="Raja A."/>
            <person name="Underwood J."/>
            <person name="Diekhans M."/>
            <person name="Fiddes I."/>
            <person name="Haussler D."/>
            <person name="Eichler E."/>
        </authorList>
    </citation>
    <scope>NUCLEOTIDE SEQUENCE [LARGE SCALE GENOMIC DNA]</scope>
</reference>
<name>SMYD4_PONAB</name>
<dbReference type="EC" id="2.1.1.-" evidence="4"/>
<dbReference type="EMBL" id="CR860722">
    <property type="protein sequence ID" value="CAH92837.1"/>
    <property type="molecule type" value="mRNA"/>
</dbReference>
<dbReference type="EMBL" id="NDHI03003557">
    <property type="protein sequence ID" value="PNJ22491.1"/>
    <property type="molecule type" value="Genomic_DNA"/>
</dbReference>
<dbReference type="RefSeq" id="NP_001127594.1">
    <property type="nucleotide sequence ID" value="NM_001134122.1"/>
</dbReference>
<dbReference type="SMR" id="Q5R5X9"/>
<dbReference type="FunCoup" id="Q5R5X9">
    <property type="interactions" value="2774"/>
</dbReference>
<dbReference type="STRING" id="9601.ENSPPYP00000008770"/>
<dbReference type="Ensembl" id="ENSPPYT00000009128.2">
    <property type="protein sequence ID" value="ENSPPYP00000008770.1"/>
    <property type="gene ID" value="ENSPPYG00000007784.3"/>
</dbReference>
<dbReference type="GeneID" id="100174673"/>
<dbReference type="KEGG" id="pon:100174673"/>
<dbReference type="CTD" id="114826"/>
<dbReference type="eggNOG" id="KOG2084">
    <property type="taxonomic scope" value="Eukaryota"/>
</dbReference>
<dbReference type="GeneTree" id="ENSGT00730000111079"/>
<dbReference type="HOGENOM" id="CLU_021727_0_0_1"/>
<dbReference type="InParanoid" id="Q5R5X9"/>
<dbReference type="OMA" id="FDCTCPA"/>
<dbReference type="OrthoDB" id="62495at2759"/>
<dbReference type="TreeFam" id="TF106441"/>
<dbReference type="Proteomes" id="UP000001595">
    <property type="component" value="Chromosome 17"/>
</dbReference>
<dbReference type="GO" id="GO:0005737">
    <property type="term" value="C:cytoplasm"/>
    <property type="evidence" value="ECO:0000250"/>
    <property type="project" value="UniProtKB"/>
</dbReference>
<dbReference type="GO" id="GO:0005634">
    <property type="term" value="C:nucleus"/>
    <property type="evidence" value="ECO:0000250"/>
    <property type="project" value="UniProtKB"/>
</dbReference>
<dbReference type="GO" id="GO:0042826">
    <property type="term" value="F:histone deacetylase binding"/>
    <property type="evidence" value="ECO:0007669"/>
    <property type="project" value="TreeGrafter"/>
</dbReference>
<dbReference type="GO" id="GO:0008168">
    <property type="term" value="F:methyltransferase activity"/>
    <property type="evidence" value="ECO:0007669"/>
    <property type="project" value="UniProtKB-KW"/>
</dbReference>
<dbReference type="GO" id="GO:0008270">
    <property type="term" value="F:zinc ion binding"/>
    <property type="evidence" value="ECO:0007669"/>
    <property type="project" value="UniProtKB-KW"/>
</dbReference>
<dbReference type="GO" id="GO:0007507">
    <property type="term" value="P:heart development"/>
    <property type="evidence" value="ECO:0000250"/>
    <property type="project" value="UniProtKB"/>
</dbReference>
<dbReference type="GO" id="GO:0032259">
    <property type="term" value="P:methylation"/>
    <property type="evidence" value="ECO:0007669"/>
    <property type="project" value="UniProtKB-KW"/>
</dbReference>
<dbReference type="CDD" id="cd10536">
    <property type="entry name" value="SET_SMYD4"/>
    <property type="match status" value="1"/>
</dbReference>
<dbReference type="Gene3D" id="6.10.140.2220">
    <property type="match status" value="1"/>
</dbReference>
<dbReference type="Gene3D" id="2.170.270.10">
    <property type="entry name" value="SET domain"/>
    <property type="match status" value="1"/>
</dbReference>
<dbReference type="Gene3D" id="1.25.40.10">
    <property type="entry name" value="Tetratricopeptide repeat domain"/>
    <property type="match status" value="2"/>
</dbReference>
<dbReference type="InterPro" id="IPR052097">
    <property type="entry name" value="SET-MYND_domain_protein"/>
</dbReference>
<dbReference type="InterPro" id="IPR001214">
    <property type="entry name" value="SET_dom"/>
</dbReference>
<dbReference type="InterPro" id="IPR046341">
    <property type="entry name" value="SET_dom_sf"/>
</dbReference>
<dbReference type="InterPro" id="IPR044421">
    <property type="entry name" value="SMYD4_SET"/>
</dbReference>
<dbReference type="InterPro" id="IPR011990">
    <property type="entry name" value="TPR-like_helical_dom_sf"/>
</dbReference>
<dbReference type="InterPro" id="IPR002893">
    <property type="entry name" value="Znf_MYND"/>
</dbReference>
<dbReference type="PANTHER" id="PTHR46165">
    <property type="entry name" value="SET AND MYND DOMAIN-CONTAINING PROTEIN 4"/>
    <property type="match status" value="1"/>
</dbReference>
<dbReference type="PANTHER" id="PTHR46165:SF2">
    <property type="entry name" value="SET AND MYND DOMAIN-CONTAINING PROTEIN 4"/>
    <property type="match status" value="1"/>
</dbReference>
<dbReference type="Pfam" id="PF00856">
    <property type="entry name" value="SET"/>
    <property type="match status" value="1"/>
</dbReference>
<dbReference type="Pfam" id="PF01753">
    <property type="entry name" value="zf-MYND"/>
    <property type="match status" value="1"/>
</dbReference>
<dbReference type="SUPFAM" id="SSF144232">
    <property type="entry name" value="HIT/MYND zinc finger-like"/>
    <property type="match status" value="1"/>
</dbReference>
<dbReference type="SUPFAM" id="SSF82199">
    <property type="entry name" value="SET domain"/>
    <property type="match status" value="1"/>
</dbReference>
<dbReference type="SUPFAM" id="SSF48452">
    <property type="entry name" value="TPR-like"/>
    <property type="match status" value="1"/>
</dbReference>
<dbReference type="PROSITE" id="PS50280">
    <property type="entry name" value="SET"/>
    <property type="match status" value="1"/>
</dbReference>
<dbReference type="PROSITE" id="PS01360">
    <property type="entry name" value="ZF_MYND_1"/>
    <property type="match status" value="1"/>
</dbReference>
<dbReference type="PROSITE" id="PS50865">
    <property type="entry name" value="ZF_MYND_2"/>
    <property type="match status" value="1"/>
</dbReference>
<organism>
    <name type="scientific">Pongo abelii</name>
    <name type="common">Sumatran orangutan</name>
    <name type="synonym">Pongo pygmaeus abelii</name>
    <dbReference type="NCBI Taxonomy" id="9601"/>
    <lineage>
        <taxon>Eukaryota</taxon>
        <taxon>Metazoa</taxon>
        <taxon>Chordata</taxon>
        <taxon>Craniata</taxon>
        <taxon>Vertebrata</taxon>
        <taxon>Euteleostomi</taxon>
        <taxon>Mammalia</taxon>
        <taxon>Eutheria</taxon>
        <taxon>Euarchontoglires</taxon>
        <taxon>Primates</taxon>
        <taxon>Haplorrhini</taxon>
        <taxon>Catarrhini</taxon>
        <taxon>Hominidae</taxon>
        <taxon>Pongo</taxon>
    </lineage>
</organism>
<proteinExistence type="evidence at transcript level"/>
<evidence type="ECO:0000250" key="1"/>
<evidence type="ECO:0000250" key="2">
    <source>
        <dbReference type="UniProtKB" id="Q08C84"/>
    </source>
</evidence>
<evidence type="ECO:0000250" key="3">
    <source>
        <dbReference type="UniProtKB" id="Q8BTK5"/>
    </source>
</evidence>
<evidence type="ECO:0000250" key="4">
    <source>
        <dbReference type="UniProtKB" id="Q8IYR2"/>
    </source>
</evidence>
<evidence type="ECO:0000250" key="5">
    <source>
        <dbReference type="UniProtKB" id="Q9H7B4"/>
    </source>
</evidence>
<evidence type="ECO:0000255" key="6">
    <source>
        <dbReference type="PROSITE-ProRule" id="PRU00134"/>
    </source>
</evidence>
<evidence type="ECO:0000255" key="7">
    <source>
        <dbReference type="PROSITE-ProRule" id="PRU00190"/>
    </source>
</evidence>
<evidence type="ECO:0000305" key="8"/>
<comment type="function">
    <text evidence="2 4">Protein-lysine N-methyltransferase. Monomethylates PRMT5, modulating its transcriptional activity (By similarity). May also act as a histone methyltransferase (By similarity). Plays a critical role in cardiac development. Acts as a key epigenetic regulator of gene expression during cardiac development via its dual activities as a methyltransferase and negative regulator of HDAC1 (By similarity).</text>
</comment>
<comment type="catalytic activity">
    <reaction evidence="4">
        <text>L-lysyl-[protein] + S-adenosyl-L-methionine = N(6)-methyl-L-lysyl-[protein] + S-adenosyl-L-homocysteine + H(+)</text>
        <dbReference type="Rhea" id="RHEA:51736"/>
        <dbReference type="Rhea" id="RHEA-COMP:9752"/>
        <dbReference type="Rhea" id="RHEA-COMP:13053"/>
        <dbReference type="ChEBI" id="CHEBI:15378"/>
        <dbReference type="ChEBI" id="CHEBI:29969"/>
        <dbReference type="ChEBI" id="CHEBI:57856"/>
        <dbReference type="ChEBI" id="CHEBI:59789"/>
        <dbReference type="ChEBI" id="CHEBI:61929"/>
    </reaction>
</comment>
<comment type="subunit">
    <text evidence="4">Interacts (via MYND-type zinc finger) with HDAC1.</text>
</comment>
<comment type="subcellular location">
    <subcellularLocation>
        <location evidence="3">Nucleus</location>
    </subcellularLocation>
    <subcellularLocation>
        <location evidence="3">Cytoplasm</location>
    </subcellularLocation>
</comment>
<comment type="similarity">
    <text evidence="7">Belongs to the class V-like SAM-binding methyltransferase superfamily.</text>
</comment>
<accession>Q5R5X9</accession>
<accession>A0A2J8SNY7</accession>
<accession>A0A6D2XCW6</accession>
<accession>H2NS64</accession>
<sequence>MDLPVDEWKSYLLQKWASLPTSVQVTISTAETLRDIFLHSSSLLQPEDELFLKRLSKGYLVGKDLDAPLFYREEGNKKFQEKDYTGAAVLYSKGVSHSRPNTEDMSLCYANRSAALFHLGEYETCLKDINRAQTHGYPERLQPKIMLRKAECLVALGRLQEASQTISDLERNFTATPTLANVRPQTLQRNLHHLKMKVQEKDKLTETFPAALAKTLEDAALREENEQLSSASSSVGLCIDPLKGRYLVATKDILPGELLVKEDAFVSVLNPGELPPPHHGLDSKWDTRVTNGDLYCHRCLKHTLATVPCDGCSYAKYCSQECLQQAWELYHRTECPLGGLLLTLGVFCHIALRLTLLVGFEDVRKIITKVCDKISNKDICLPESNNQVKTLNYGLGESEKSGNIIETPIPGCDINGKYENNYNAVFNLLPHTENHSPEHKFLCALCVSALCRQLEAASFQAIPTERSVNSSQLQAAVTPELCPDVTIWGVAMLRHMLQLHCNAQAMTTIQHTGSKGSIVTDSRQVRLATGIFPVVSLLNHSCSPNTSMSFISTVAAIQASQRIRKGQEILHCYGPHKSRMGVAERQQKLRSQYFFDCACPACQTEAHRMAAEPRWEAFCCNSCGAPMQGDDVLHCGSRSCAESAVSRDHLVSRLQDLQQQVGVAQKLLRDGELERAVQQLLGCQRDAESFLWAEHALVGEIADGLARACAALGDWQKAATHLQRSLRVVEVRHGPSSVEMGHELFKLAQIFFNGFAVPEALSTIQKAEEALLLHCGPWDDEIQELQKMKSCLLDLPPTPVGPAV</sequence>
<keyword id="KW-0963">Cytoplasm</keyword>
<keyword id="KW-0479">Metal-binding</keyword>
<keyword id="KW-0489">Methyltransferase</keyword>
<keyword id="KW-0539">Nucleus</keyword>
<keyword id="KW-1185">Reference proteome</keyword>
<keyword id="KW-0949">S-adenosyl-L-methionine</keyword>
<keyword id="KW-0808">Transferase</keyword>
<keyword id="KW-0862">Zinc</keyword>
<keyword id="KW-0863">Zinc-finger</keyword>
<feature type="chain" id="PRO_0000227786" description="Protein-lysine N-methyltransferase SMYD4">
    <location>
        <begin position="1"/>
        <end position="804"/>
    </location>
</feature>
<feature type="domain" description="SET" evidence="7">
    <location>
        <begin position="233"/>
        <end position="574"/>
    </location>
</feature>
<feature type="zinc finger region" description="MYND-type" evidence="6">
    <location>
        <begin position="296"/>
        <end position="335"/>
    </location>
</feature>
<feature type="binding site" evidence="1">
    <location>
        <begin position="112"/>
        <end position="114"/>
    </location>
    <ligand>
        <name>S-adenosyl-L-methionine</name>
        <dbReference type="ChEBI" id="CHEBI:59789"/>
    </ligand>
</feature>
<feature type="binding site" evidence="6">
    <location>
        <position position="296"/>
    </location>
    <ligand>
        <name>Zn(2+)</name>
        <dbReference type="ChEBI" id="CHEBI:29105"/>
        <label>1</label>
    </ligand>
</feature>
<feature type="binding site" evidence="6">
    <location>
        <position position="299"/>
    </location>
    <ligand>
        <name>Zn(2+)</name>
        <dbReference type="ChEBI" id="CHEBI:29105"/>
        <label>1</label>
    </ligand>
</feature>
<feature type="binding site" evidence="6">
    <location>
        <position position="309"/>
    </location>
    <ligand>
        <name>Zn(2+)</name>
        <dbReference type="ChEBI" id="CHEBI:29105"/>
        <label>2</label>
    </ligand>
</feature>
<feature type="binding site" evidence="6">
    <location>
        <position position="312"/>
    </location>
    <ligand>
        <name>Zn(2+)</name>
        <dbReference type="ChEBI" id="CHEBI:29105"/>
        <label>2</label>
    </ligand>
</feature>
<feature type="binding site" evidence="6">
    <location>
        <position position="318"/>
    </location>
    <ligand>
        <name>Zn(2+)</name>
        <dbReference type="ChEBI" id="CHEBI:29105"/>
        <label>1</label>
    </ligand>
</feature>
<feature type="binding site" evidence="6">
    <location>
        <position position="322"/>
    </location>
    <ligand>
        <name>Zn(2+)</name>
        <dbReference type="ChEBI" id="CHEBI:29105"/>
        <label>1</label>
    </ligand>
</feature>
<feature type="binding site" evidence="6">
    <location>
        <position position="331"/>
    </location>
    <ligand>
        <name>Zn(2+)</name>
        <dbReference type="ChEBI" id="CHEBI:29105"/>
        <label>2</label>
    </ligand>
</feature>
<feature type="binding site" evidence="6">
    <location>
        <position position="335"/>
    </location>
    <ligand>
        <name>Zn(2+)</name>
        <dbReference type="ChEBI" id="CHEBI:29105"/>
        <label>2</label>
    </ligand>
</feature>
<feature type="binding site" evidence="7">
    <location>
        <position position="427"/>
    </location>
    <ligand>
        <name>S-adenosyl-L-methionine</name>
        <dbReference type="ChEBI" id="CHEBI:59789"/>
    </ligand>
</feature>
<feature type="binding site" evidence="5">
    <location>
        <begin position="539"/>
        <end position="540"/>
    </location>
    <ligand>
        <name>S-adenosyl-L-methionine</name>
        <dbReference type="ChEBI" id="CHEBI:59789"/>
    </ligand>
</feature>
<feature type="binding site" evidence="7">
    <location>
        <position position="573"/>
    </location>
    <ligand>
        <name>S-adenosyl-L-methionine</name>
        <dbReference type="ChEBI" id="CHEBI:59789"/>
    </ligand>
</feature>
<feature type="binding site" evidence="7">
    <location>
        <position position="595"/>
    </location>
    <ligand>
        <name>S-adenosyl-L-methionine</name>
        <dbReference type="ChEBI" id="CHEBI:59789"/>
    </ligand>
</feature>
<feature type="sequence conflict" description="In Ref. 1; CAH92837." evidence="8" ref="1">
    <original>H</original>
    <variation>Q</variation>
    <location>
        <position position="500"/>
    </location>
</feature>
<feature type="sequence conflict" description="In Ref. 1; CAH92837." evidence="8" ref="1">
    <original>A</original>
    <variation>T</variation>
    <location>
        <position position="556"/>
    </location>
</feature>
<feature type="sequence conflict" description="In Ref. 1; CAH92837." evidence="8" ref="1">
    <original>K</original>
    <variation>E</variation>
    <location>
        <position position="588"/>
    </location>
</feature>
<protein>
    <recommendedName>
        <fullName>Protein-lysine N-methyltransferase SMYD4</fullName>
        <ecNumber evidence="4">2.1.1.-</ecNumber>
    </recommendedName>
    <alternativeName>
        <fullName>SET and MYND domain-containing protein 4</fullName>
    </alternativeName>
</protein>
<gene>
    <name type="primary">SMYD4</name>
</gene>